<dbReference type="EMBL" id="AEHH01000016">
    <property type="protein sequence ID" value="EGA59024.1"/>
    <property type="molecule type" value="Genomic_DNA"/>
</dbReference>
<dbReference type="GlyCosmos" id="E7Q311">
    <property type="glycosylation" value="1 site, No reported glycans"/>
</dbReference>
<dbReference type="HOGENOM" id="CLU_043316_0_0_1"/>
<dbReference type="OrthoDB" id="5983572at2759"/>
<dbReference type="GO" id="GO:0042995">
    <property type="term" value="C:cell projection"/>
    <property type="evidence" value="ECO:0007669"/>
    <property type="project" value="UniProtKB-SubCell"/>
</dbReference>
<dbReference type="GO" id="GO:0005935">
    <property type="term" value="C:cellular bud neck"/>
    <property type="evidence" value="ECO:0007669"/>
    <property type="project" value="UniProtKB-SubCell"/>
</dbReference>
<dbReference type="GO" id="GO:0005886">
    <property type="term" value="C:plasma membrane"/>
    <property type="evidence" value="ECO:0007669"/>
    <property type="project" value="UniProtKB-SubCell"/>
</dbReference>
<dbReference type="GO" id="GO:0030833">
    <property type="term" value="P:regulation of actin filament polymerization"/>
    <property type="evidence" value="ECO:0007669"/>
    <property type="project" value="TreeGrafter"/>
</dbReference>
<dbReference type="CDD" id="cd11855">
    <property type="entry name" value="SH3_Sho1p"/>
    <property type="match status" value="1"/>
</dbReference>
<dbReference type="FunFam" id="2.30.30.40:FF:000213">
    <property type="entry name" value="High osmolarity signaling protein SHO1"/>
    <property type="match status" value="1"/>
</dbReference>
<dbReference type="Gene3D" id="2.30.30.40">
    <property type="entry name" value="SH3 Domains"/>
    <property type="match status" value="1"/>
</dbReference>
<dbReference type="InterPro" id="IPR036028">
    <property type="entry name" value="SH3-like_dom_sf"/>
</dbReference>
<dbReference type="InterPro" id="IPR001452">
    <property type="entry name" value="SH3_domain"/>
</dbReference>
<dbReference type="InterPro" id="IPR035522">
    <property type="entry name" value="Sho1_SH3"/>
</dbReference>
<dbReference type="PANTHER" id="PTHR15735">
    <property type="entry name" value="FCH AND DOUBLE SH3 DOMAINS PROTEIN"/>
    <property type="match status" value="1"/>
</dbReference>
<dbReference type="PANTHER" id="PTHR15735:SF20">
    <property type="entry name" value="HIGH OSMOLARITY SIGNALING PROTEIN SHO1"/>
    <property type="match status" value="1"/>
</dbReference>
<dbReference type="Pfam" id="PF00018">
    <property type="entry name" value="SH3_1"/>
    <property type="match status" value="1"/>
</dbReference>
<dbReference type="PRINTS" id="PR00452">
    <property type="entry name" value="SH3DOMAIN"/>
</dbReference>
<dbReference type="SMART" id="SM00326">
    <property type="entry name" value="SH3"/>
    <property type="match status" value="1"/>
</dbReference>
<dbReference type="SUPFAM" id="SSF50044">
    <property type="entry name" value="SH3-domain"/>
    <property type="match status" value="1"/>
</dbReference>
<dbReference type="PROSITE" id="PS50002">
    <property type="entry name" value="SH3"/>
    <property type="match status" value="1"/>
</dbReference>
<evidence type="ECO:0000250" key="1"/>
<evidence type="ECO:0000250" key="2">
    <source>
        <dbReference type="UniProtKB" id="P40073"/>
    </source>
</evidence>
<evidence type="ECO:0000255" key="3"/>
<evidence type="ECO:0000255" key="4">
    <source>
        <dbReference type="PROSITE-ProRule" id="PRU00192"/>
    </source>
</evidence>
<evidence type="ECO:0000256" key="5">
    <source>
        <dbReference type="SAM" id="MobiDB-lite"/>
    </source>
</evidence>
<evidence type="ECO:0000305" key="6"/>
<organism>
    <name type="scientific">Saccharomyces cerevisiae (strain FostersB)</name>
    <name type="common">Baker's yeast</name>
    <dbReference type="NCBI Taxonomy" id="764102"/>
    <lineage>
        <taxon>Eukaryota</taxon>
        <taxon>Fungi</taxon>
        <taxon>Dikarya</taxon>
        <taxon>Ascomycota</taxon>
        <taxon>Saccharomycotina</taxon>
        <taxon>Saccharomycetes</taxon>
        <taxon>Saccharomycetales</taxon>
        <taxon>Saccharomycetaceae</taxon>
        <taxon>Saccharomyces</taxon>
    </lineage>
</organism>
<keyword id="KW-1003">Cell membrane</keyword>
<keyword id="KW-0966">Cell projection</keyword>
<keyword id="KW-0325">Glycoprotein</keyword>
<keyword id="KW-0472">Membrane</keyword>
<keyword id="KW-0597">Phosphoprotein</keyword>
<keyword id="KW-0728">SH3 domain</keyword>
<keyword id="KW-0346">Stress response</keyword>
<keyword id="KW-0812">Transmembrane</keyword>
<keyword id="KW-1133">Transmembrane helix</keyword>
<sequence>MSISSKIRPTPRXPSRMATDHSFKMKNFYADPFAISSISLAIVSWVIAIGGSISSASTNESFPRFTWWGIVYQFLIICSLMLFYCFDLVDHYRIFITTSIAVAFVYNTNSATNLVYADGPKKAAASAGVILLSIINLIWILYYGGDNASPTNRWIDSFSIKGIRPSPLENSLHRARRRGNRNTTPYQNNVYNDAIRDSGYATQFDGYPQQQPSHTNYVSSTALAGFENTQPNTSEAVNLHLNXLQQRINSASNAKETNDNSNNQTNTNIGNTFDTDFSNGNTETTMGDTLGLYSDIGDDNFIYKAKALYPYDADDDDAYEISFEQNEILQVSDIEGRWWKARRANGETGIIPSNYVQLIDGPEEMHR</sequence>
<gene>
    <name type="primary">SHO1</name>
    <name type="synonym">SSU81</name>
    <name type="ORF">FOSTERSB_1371</name>
</gene>
<protein>
    <recommendedName>
        <fullName>High osmolarity signaling protein SHO1</fullName>
    </recommendedName>
    <alternativeName>
        <fullName>Osmosensor SHO1</fullName>
    </alternativeName>
    <alternativeName>
        <fullName>Suppressor of SUA8-1 mutation</fullName>
    </alternativeName>
    <alternativeName>
        <fullName>Synthetic high osmolarity-sensitive protein 1</fullName>
    </alternativeName>
</protein>
<comment type="function">
    <text evidence="1">Plasma membrane osmosensor that activates the high osmolarity glycerol (HOG) MAPK signaling pathway in response to high osmolarity. Detects changes in external osmolarity and activates PBS2 through the stimulation of STE11 and targets PBS2 to the plasma membrane. PBS2 activation leads to changes in glycerol production that helps to balance the intracellular and external osmotic pressures. Activates also HOG1 in response to heat stress and mediates resistance to oxidative stress. Involved in the regulation of the mating pathway. May be a receptor that feeds into the pseudohyphal growth pathway (By similarity).</text>
</comment>
<comment type="subunit">
    <text evidence="1">Forms homooligomers (By similarity). Interacts (via the SH3 domain) with PBS2. Interacts with FUS1, STE11, STE50 and RNA polymerase II (By similarity).</text>
</comment>
<comment type="subcellular location">
    <subcellularLocation>
        <location evidence="1">Cell membrane</location>
        <topology evidence="1">Multi-pass membrane protein</topology>
    </subcellularLocation>
    <subcellularLocation>
        <location evidence="1">Bud</location>
    </subcellularLocation>
    <subcellularLocation>
        <location evidence="1">Bud neck</location>
    </subcellularLocation>
    <subcellularLocation>
        <location evidence="1">Cell projection</location>
    </subcellularLocation>
    <text evidence="1">Localizes at the tip of the mating projection during conjugation.</text>
</comment>
<comment type="similarity">
    <text evidence="6">Belongs to the SHO1 family.</text>
</comment>
<proteinExistence type="inferred from homology"/>
<name>SHO1_YEASB</name>
<accession>E7Q311</accession>
<feature type="chain" id="PRO_0000410413" description="High osmolarity signaling protein SHO1">
    <location>
        <begin position="1"/>
        <end position="367"/>
    </location>
</feature>
<feature type="topological domain" description="Cytoplasmic" evidence="3">
    <location>
        <begin position="1"/>
        <end position="32"/>
    </location>
</feature>
<feature type="transmembrane region" description="Helical" evidence="3">
    <location>
        <begin position="33"/>
        <end position="53"/>
    </location>
</feature>
<feature type="topological domain" description="Extracellular" evidence="3">
    <location>
        <begin position="54"/>
        <end position="65"/>
    </location>
</feature>
<feature type="transmembrane region" description="Helical" evidence="3">
    <location>
        <begin position="66"/>
        <end position="86"/>
    </location>
</feature>
<feature type="topological domain" description="Cytoplasmic" evidence="3">
    <location>
        <begin position="87"/>
        <end position="93"/>
    </location>
</feature>
<feature type="transmembrane region" description="Helical" evidence="3">
    <location>
        <begin position="94"/>
        <end position="114"/>
    </location>
</feature>
<feature type="topological domain" description="Extracellular" evidence="3">
    <location>
        <begin position="115"/>
        <end position="122"/>
    </location>
</feature>
<feature type="transmembrane region" description="Helical" evidence="3">
    <location>
        <begin position="123"/>
        <end position="143"/>
    </location>
</feature>
<feature type="topological domain" description="Cytoplasmic" evidence="3">
    <location>
        <begin position="144"/>
        <end position="367"/>
    </location>
</feature>
<feature type="domain" description="SH3" evidence="4">
    <location>
        <begin position="300"/>
        <end position="361"/>
    </location>
</feature>
<feature type="region of interest" description="Disordered" evidence="5">
    <location>
        <begin position="252"/>
        <end position="276"/>
    </location>
</feature>
<feature type="compositionally biased region" description="Low complexity" evidence="5">
    <location>
        <begin position="259"/>
        <end position="272"/>
    </location>
</feature>
<feature type="modified residue" description="Phosphoserine" evidence="2">
    <location>
        <position position="166"/>
    </location>
</feature>
<feature type="glycosylation site" description="N-linked (GlcNAc...) asparagine" evidence="3">
    <location>
        <position position="59"/>
    </location>
</feature>
<reference key="1">
    <citation type="journal article" date="2011" name="PLoS Genet.">
        <title>Whole-genome comparison reveals novel genetic elements that characterize the genome of industrial strains of Saccharomyces cerevisiae.</title>
        <authorList>
            <person name="Borneman A.R."/>
            <person name="Desany B.A."/>
            <person name="Riches D."/>
            <person name="Affourtit J.P."/>
            <person name="Forgan A.H."/>
            <person name="Pretorius I.S."/>
            <person name="Egholm M."/>
            <person name="Chambers P.J."/>
        </authorList>
    </citation>
    <scope>NUCLEOTIDE SEQUENCE [LARGE SCALE GENOMIC DNA]</scope>
    <source>
        <strain>FostersB</strain>
    </source>
</reference>